<organism>
    <name type="scientific">Bacillus anthracis</name>
    <dbReference type="NCBI Taxonomy" id="1392"/>
    <lineage>
        <taxon>Bacteria</taxon>
        <taxon>Bacillati</taxon>
        <taxon>Bacillota</taxon>
        <taxon>Bacilli</taxon>
        <taxon>Bacillales</taxon>
        <taxon>Bacillaceae</taxon>
        <taxon>Bacillus</taxon>
        <taxon>Bacillus cereus group</taxon>
    </lineage>
</organism>
<reference key="1">
    <citation type="journal article" date="2003" name="Nature">
        <title>The genome sequence of Bacillus anthracis Ames and comparison to closely related bacteria.</title>
        <authorList>
            <person name="Read T.D."/>
            <person name="Peterson S.N."/>
            <person name="Tourasse N.J."/>
            <person name="Baillie L.W."/>
            <person name="Paulsen I.T."/>
            <person name="Nelson K.E."/>
            <person name="Tettelin H."/>
            <person name="Fouts D.E."/>
            <person name="Eisen J.A."/>
            <person name="Gill S.R."/>
            <person name="Holtzapple E.K."/>
            <person name="Okstad O.A."/>
            <person name="Helgason E."/>
            <person name="Rilstone J."/>
            <person name="Wu M."/>
            <person name="Kolonay J.F."/>
            <person name="Beanan M.J."/>
            <person name="Dodson R.J."/>
            <person name="Brinkac L.M."/>
            <person name="Gwinn M.L."/>
            <person name="DeBoy R.T."/>
            <person name="Madpu R."/>
            <person name="Daugherty S.C."/>
            <person name="Durkin A.S."/>
            <person name="Haft D.H."/>
            <person name="Nelson W.C."/>
            <person name="Peterson J.D."/>
            <person name="Pop M."/>
            <person name="Khouri H.M."/>
            <person name="Radune D."/>
            <person name="Benton J.L."/>
            <person name="Mahamoud Y."/>
            <person name="Jiang L."/>
            <person name="Hance I.R."/>
            <person name="Weidman J.F."/>
            <person name="Berry K.J."/>
            <person name="Plaut R.D."/>
            <person name="Wolf A.M."/>
            <person name="Watkins K.L."/>
            <person name="Nierman W.C."/>
            <person name="Hazen A."/>
            <person name="Cline R.T."/>
            <person name="Redmond C."/>
            <person name="Thwaite J.E."/>
            <person name="White O."/>
            <person name="Salzberg S.L."/>
            <person name="Thomason B."/>
            <person name="Friedlander A.M."/>
            <person name="Koehler T.M."/>
            <person name="Hanna P.C."/>
            <person name="Kolstoe A.-B."/>
            <person name="Fraser C.M."/>
        </authorList>
    </citation>
    <scope>NUCLEOTIDE SEQUENCE [LARGE SCALE GENOMIC DNA]</scope>
    <source>
        <strain>Ames / isolate Porton</strain>
    </source>
</reference>
<reference key="2">
    <citation type="journal article" date="2009" name="J. Bacteriol.">
        <title>The complete genome sequence of Bacillus anthracis Ames 'Ancestor'.</title>
        <authorList>
            <person name="Ravel J."/>
            <person name="Jiang L."/>
            <person name="Stanley S.T."/>
            <person name="Wilson M.R."/>
            <person name="Decker R.S."/>
            <person name="Read T.D."/>
            <person name="Worsham P."/>
            <person name="Keim P.S."/>
            <person name="Salzberg S.L."/>
            <person name="Fraser-Liggett C.M."/>
            <person name="Rasko D.A."/>
        </authorList>
    </citation>
    <scope>NUCLEOTIDE SEQUENCE [LARGE SCALE GENOMIC DNA]</scope>
    <source>
        <strain>Ames ancestor</strain>
    </source>
</reference>
<reference key="3">
    <citation type="submission" date="2004-01" db="EMBL/GenBank/DDBJ databases">
        <title>Complete genome sequence of Bacillus anthracis Sterne.</title>
        <authorList>
            <person name="Brettin T.S."/>
            <person name="Bruce D."/>
            <person name="Challacombe J.F."/>
            <person name="Gilna P."/>
            <person name="Han C."/>
            <person name="Hill K."/>
            <person name="Hitchcock P."/>
            <person name="Jackson P."/>
            <person name="Keim P."/>
            <person name="Longmire J."/>
            <person name="Lucas S."/>
            <person name="Okinaka R."/>
            <person name="Richardson P."/>
            <person name="Rubin E."/>
            <person name="Tice H."/>
        </authorList>
    </citation>
    <scope>NUCLEOTIDE SEQUENCE [LARGE SCALE GENOMIC DNA]</scope>
    <source>
        <strain>Sterne</strain>
    </source>
</reference>
<feature type="chain" id="PRO_0000294030" description="Coproheme decarboxylase">
    <location>
        <begin position="1"/>
        <end position="247"/>
    </location>
</feature>
<feature type="active site" evidence="1">
    <location>
        <position position="143"/>
    </location>
</feature>
<feature type="binding site" evidence="1">
    <location>
        <position position="129"/>
    </location>
    <ligand>
        <name>Fe-coproporphyrin III</name>
        <dbReference type="ChEBI" id="CHEBI:68438"/>
    </ligand>
</feature>
<feature type="binding site" evidence="1">
    <location>
        <begin position="143"/>
        <end position="147"/>
    </location>
    <ligand>
        <name>Fe-coproporphyrin III</name>
        <dbReference type="ChEBI" id="CHEBI:68438"/>
    </ligand>
</feature>
<feature type="binding site" description="axial binding residue" evidence="1">
    <location>
        <position position="170"/>
    </location>
    <ligand>
        <name>Fe-coproporphyrin III</name>
        <dbReference type="ChEBI" id="CHEBI:68438"/>
    </ligand>
    <ligandPart>
        <name>Fe</name>
        <dbReference type="ChEBI" id="CHEBI:18248"/>
    </ligandPart>
</feature>
<feature type="binding site" evidence="1">
    <location>
        <position position="183"/>
    </location>
    <ligand>
        <name>Fe-coproporphyrin III</name>
        <dbReference type="ChEBI" id="CHEBI:68438"/>
    </ligand>
</feature>
<feature type="binding site" evidence="1">
    <location>
        <position position="221"/>
    </location>
    <ligand>
        <name>Fe-coproporphyrin III</name>
        <dbReference type="ChEBI" id="CHEBI:68438"/>
    </ligand>
</feature>
<sequence>MSEATTTLDGWYCLHDLRSIDWAAWKTLSSDERGQAVSEFLNVVEKWNDVAAAKKGSHAMYTVVGQKADIMLMILRPTMEELNEIETELNKTTLAEYMVPAYSYVSVVELSNYLPADEDPYQNPQILARLYPELPKANHICFYPMDKRRQGDDNWYMLPMEERKKMMYSHSKIGRQYAGKVRQVISGSVGFDDFEWGVTLFADDVLQFKKLIYEMRFDEVSARYGEFGTFFVGNILPDEKVEKFLHI</sequence>
<evidence type="ECO:0000255" key="1">
    <source>
        <dbReference type="HAMAP-Rule" id="MF_01442"/>
    </source>
</evidence>
<keyword id="KW-0349">Heme</keyword>
<keyword id="KW-0350">Heme biosynthesis</keyword>
<keyword id="KW-0408">Iron</keyword>
<keyword id="KW-0479">Metal-binding</keyword>
<keyword id="KW-0560">Oxidoreductase</keyword>
<keyword id="KW-1185">Reference proteome</keyword>
<accession>Q81JR3</accession>
<accession>Q6HQB1</accession>
<accession>Q6KJP2</accession>
<protein>
    <recommendedName>
        <fullName evidence="1">Coproheme decarboxylase</fullName>
        <ecNumber evidence="1">1.3.98.5</ecNumber>
    </recommendedName>
    <alternativeName>
        <fullName evidence="1">Coproheme III oxidative decarboxylase</fullName>
    </alternativeName>
    <alternativeName>
        <fullName evidence="1">Hydrogen peroxide-dependent heme synthase</fullName>
    </alternativeName>
</protein>
<gene>
    <name evidence="1" type="primary">chdC</name>
    <name type="ordered locus">BA_5637</name>
    <name type="ordered locus">GBAA_5637</name>
    <name type="ordered locus">BAS5239</name>
</gene>
<proteinExistence type="inferred from homology"/>
<name>CHDC_BACAN</name>
<comment type="function">
    <text evidence="1">Involved in coproporphyrin-dependent heme b biosynthesis. Catalyzes the decarboxylation of Fe-coproporphyrin III (coproheme) to heme b (protoheme IX), the last step of the pathway. The reaction occurs in a stepwise manner with a three-propionate intermediate.</text>
</comment>
<comment type="catalytic activity">
    <reaction evidence="1">
        <text>Fe-coproporphyrin III + 2 H2O2 + 2 H(+) = heme b + 2 CO2 + 4 H2O</text>
        <dbReference type="Rhea" id="RHEA:56516"/>
        <dbReference type="ChEBI" id="CHEBI:15377"/>
        <dbReference type="ChEBI" id="CHEBI:15378"/>
        <dbReference type="ChEBI" id="CHEBI:16240"/>
        <dbReference type="ChEBI" id="CHEBI:16526"/>
        <dbReference type="ChEBI" id="CHEBI:60344"/>
        <dbReference type="ChEBI" id="CHEBI:68438"/>
        <dbReference type="EC" id="1.3.98.5"/>
    </reaction>
    <physiologicalReaction direction="left-to-right" evidence="1">
        <dbReference type="Rhea" id="RHEA:56517"/>
    </physiologicalReaction>
</comment>
<comment type="catalytic activity">
    <reaction evidence="1">
        <text>Fe-coproporphyrin III + H2O2 + H(+) = harderoheme III + CO2 + 2 H2O</text>
        <dbReference type="Rhea" id="RHEA:57940"/>
        <dbReference type="ChEBI" id="CHEBI:15377"/>
        <dbReference type="ChEBI" id="CHEBI:15378"/>
        <dbReference type="ChEBI" id="CHEBI:16240"/>
        <dbReference type="ChEBI" id="CHEBI:16526"/>
        <dbReference type="ChEBI" id="CHEBI:68438"/>
        <dbReference type="ChEBI" id="CHEBI:142463"/>
    </reaction>
    <physiologicalReaction direction="left-to-right" evidence="1">
        <dbReference type="Rhea" id="RHEA:57941"/>
    </physiologicalReaction>
</comment>
<comment type="catalytic activity">
    <reaction evidence="1">
        <text>harderoheme III + H2O2 + H(+) = heme b + CO2 + 2 H2O</text>
        <dbReference type="Rhea" id="RHEA:57944"/>
        <dbReference type="ChEBI" id="CHEBI:15377"/>
        <dbReference type="ChEBI" id="CHEBI:15378"/>
        <dbReference type="ChEBI" id="CHEBI:16240"/>
        <dbReference type="ChEBI" id="CHEBI:16526"/>
        <dbReference type="ChEBI" id="CHEBI:60344"/>
        <dbReference type="ChEBI" id="CHEBI:142463"/>
    </reaction>
    <physiologicalReaction direction="left-to-right" evidence="1">
        <dbReference type="Rhea" id="RHEA:57945"/>
    </physiologicalReaction>
</comment>
<comment type="cofactor">
    <cofactor evidence="1">
        <name>Fe-coproporphyrin III</name>
        <dbReference type="ChEBI" id="CHEBI:68438"/>
    </cofactor>
    <text evidence="1">Fe-coproporphyrin III acts both as a substrate and a redox cofactor.</text>
</comment>
<comment type="pathway">
    <text evidence="1">Porphyrin-containing compound metabolism; protoheme biosynthesis.</text>
</comment>
<comment type="similarity">
    <text evidence="1">Belongs to the ChdC family. Type 1 subfamily.</text>
</comment>
<dbReference type="EC" id="1.3.98.5" evidence="1"/>
<dbReference type="EMBL" id="AE016879">
    <property type="protein sequence ID" value="AAP29273.1"/>
    <property type="molecule type" value="Genomic_DNA"/>
</dbReference>
<dbReference type="EMBL" id="AE017334">
    <property type="protein sequence ID" value="AAT34787.1"/>
    <property type="molecule type" value="Genomic_DNA"/>
</dbReference>
<dbReference type="EMBL" id="AE017225">
    <property type="protein sequence ID" value="AAT57527.1"/>
    <property type="molecule type" value="Genomic_DNA"/>
</dbReference>
<dbReference type="RefSeq" id="NP_847787.1">
    <property type="nucleotide sequence ID" value="NC_003997.3"/>
</dbReference>
<dbReference type="RefSeq" id="YP_031477.1">
    <property type="nucleotide sequence ID" value="NC_005945.1"/>
</dbReference>
<dbReference type="SMR" id="Q81JR3"/>
<dbReference type="IntAct" id="Q81JR3">
    <property type="interactions" value="1"/>
</dbReference>
<dbReference type="STRING" id="261594.GBAA_5637"/>
<dbReference type="DNASU" id="1085356"/>
<dbReference type="KEGG" id="ban:BA_5637"/>
<dbReference type="KEGG" id="banh:HYU01_27515"/>
<dbReference type="KEGG" id="bar:GBAA_5637"/>
<dbReference type="KEGG" id="bat:BAS5239"/>
<dbReference type="PATRIC" id="fig|198094.11.peg.5596"/>
<dbReference type="eggNOG" id="COG3253">
    <property type="taxonomic scope" value="Bacteria"/>
</dbReference>
<dbReference type="HOGENOM" id="CLU_063226_1_0_9"/>
<dbReference type="OMA" id="RYTMWSV"/>
<dbReference type="OrthoDB" id="9773646at2"/>
<dbReference type="UniPathway" id="UPA00252"/>
<dbReference type="Proteomes" id="UP000000427">
    <property type="component" value="Chromosome"/>
</dbReference>
<dbReference type="Proteomes" id="UP000000594">
    <property type="component" value="Chromosome"/>
</dbReference>
<dbReference type="GO" id="GO:0020037">
    <property type="term" value="F:heme binding"/>
    <property type="evidence" value="ECO:0007669"/>
    <property type="project" value="InterPro"/>
</dbReference>
<dbReference type="GO" id="GO:0046872">
    <property type="term" value="F:metal ion binding"/>
    <property type="evidence" value="ECO:0007669"/>
    <property type="project" value="UniProtKB-KW"/>
</dbReference>
<dbReference type="GO" id="GO:0016634">
    <property type="term" value="F:oxidoreductase activity, acting on the CH-CH group of donors, oxygen as acceptor"/>
    <property type="evidence" value="ECO:0007669"/>
    <property type="project" value="UniProtKB-UniRule"/>
</dbReference>
<dbReference type="GO" id="GO:0004601">
    <property type="term" value="F:peroxidase activity"/>
    <property type="evidence" value="ECO:0007669"/>
    <property type="project" value="InterPro"/>
</dbReference>
<dbReference type="GO" id="GO:0006785">
    <property type="term" value="P:heme B biosynthetic process"/>
    <property type="evidence" value="ECO:0007669"/>
    <property type="project" value="UniProtKB-UniRule"/>
</dbReference>
<dbReference type="Gene3D" id="3.30.70.1030">
    <property type="entry name" value="Apc35880, domain 1"/>
    <property type="match status" value="2"/>
</dbReference>
<dbReference type="HAMAP" id="MF_01442">
    <property type="entry name" value="Coproheme_decarbox_1"/>
    <property type="match status" value="1"/>
</dbReference>
<dbReference type="InterPro" id="IPR031332">
    <property type="entry name" value="CHDC"/>
</dbReference>
<dbReference type="InterPro" id="IPR010644">
    <property type="entry name" value="ChdC/CLD"/>
</dbReference>
<dbReference type="InterPro" id="IPR011008">
    <property type="entry name" value="Dimeric_a/b-barrel"/>
</dbReference>
<dbReference type="NCBIfam" id="NF008913">
    <property type="entry name" value="PRK12276.1"/>
    <property type="match status" value="1"/>
</dbReference>
<dbReference type="PANTHER" id="PTHR36843:SF1">
    <property type="entry name" value="COPROHEME DECARBOXYLASE"/>
    <property type="match status" value="1"/>
</dbReference>
<dbReference type="PANTHER" id="PTHR36843">
    <property type="entry name" value="HEME-DEPENDENT PEROXIDASE YWFI-RELATED"/>
    <property type="match status" value="1"/>
</dbReference>
<dbReference type="Pfam" id="PF06778">
    <property type="entry name" value="Chlor_dismutase"/>
    <property type="match status" value="1"/>
</dbReference>
<dbReference type="SUPFAM" id="SSF54909">
    <property type="entry name" value="Dimeric alpha+beta barrel"/>
    <property type="match status" value="1"/>
</dbReference>